<gene>
    <name evidence="1" type="primary">glmM</name>
    <name type="ordered locus">Clos_2382</name>
</gene>
<accession>A8MJD2</accession>
<name>GLMM_ALKOO</name>
<reference key="1">
    <citation type="submission" date="2007-10" db="EMBL/GenBank/DDBJ databases">
        <title>Complete genome of Alkaliphilus oremlandii OhILAs.</title>
        <authorList>
            <person name="Copeland A."/>
            <person name="Lucas S."/>
            <person name="Lapidus A."/>
            <person name="Barry K."/>
            <person name="Detter J.C."/>
            <person name="Glavina del Rio T."/>
            <person name="Hammon N."/>
            <person name="Israni S."/>
            <person name="Dalin E."/>
            <person name="Tice H."/>
            <person name="Pitluck S."/>
            <person name="Chain P."/>
            <person name="Malfatti S."/>
            <person name="Shin M."/>
            <person name="Vergez L."/>
            <person name="Schmutz J."/>
            <person name="Larimer F."/>
            <person name="Land M."/>
            <person name="Hauser L."/>
            <person name="Kyrpides N."/>
            <person name="Mikhailova N."/>
            <person name="Stolz J.F."/>
            <person name="Dawson A."/>
            <person name="Fisher E."/>
            <person name="Crable B."/>
            <person name="Perera E."/>
            <person name="Lisak J."/>
            <person name="Ranganathan M."/>
            <person name="Basu P."/>
            <person name="Richardson P."/>
        </authorList>
    </citation>
    <scope>NUCLEOTIDE SEQUENCE [LARGE SCALE GENOMIC DNA]</scope>
    <source>
        <strain>OhILAs</strain>
    </source>
</reference>
<sequence length="449" mass="48663">MGKLFGTDGVRGIANRDLTPELAYQLGRIGAYVLNKDNNKRAKVAIGKDTRISGDLLESAMTAGFLSMGVDVISLGVLPTPAVAYLTRHLKADFGVVISASHNPAEYNGIKFFNREGYKLPDEVEEQIEAYILNNRDVDIRMEGKDVGTVTVDEKSIEEYTDFLKTTLDRDFKGLKIAVDAGNGAAYRSAPKLLKELGAEVILINDTPDGMNINKGCGSTNPEVIGALVKEVGADIGISFDGDADRLIAVDENGEVVDGDHIMAICGICLKKQGKLKNDVIVGTVMSNIGLEIAMKEYGCNVVKTKVGDRYVLEEMVQGGYCLGGEQSGHVIFLDYNTTGDGLLTAIQLIATMKAENKKLSELAKVMTSYPQVLVNAKVKNENKEVYQNDAIIMQSITAIENKLAGEGRVLIRPSGTEPLVRVMLEGKNQEELNVLATDLAKLIEQRLN</sequence>
<protein>
    <recommendedName>
        <fullName evidence="1">Phosphoglucosamine mutase</fullName>
        <ecNumber evidence="1">5.4.2.10</ecNumber>
    </recommendedName>
</protein>
<keyword id="KW-0413">Isomerase</keyword>
<keyword id="KW-0460">Magnesium</keyword>
<keyword id="KW-0479">Metal-binding</keyword>
<keyword id="KW-0597">Phosphoprotein</keyword>
<keyword id="KW-1185">Reference proteome</keyword>
<comment type="function">
    <text evidence="1">Catalyzes the conversion of glucosamine-6-phosphate to glucosamine-1-phosphate.</text>
</comment>
<comment type="catalytic activity">
    <reaction evidence="1">
        <text>alpha-D-glucosamine 1-phosphate = D-glucosamine 6-phosphate</text>
        <dbReference type="Rhea" id="RHEA:23424"/>
        <dbReference type="ChEBI" id="CHEBI:58516"/>
        <dbReference type="ChEBI" id="CHEBI:58725"/>
        <dbReference type="EC" id="5.4.2.10"/>
    </reaction>
</comment>
<comment type="cofactor">
    <cofactor evidence="1">
        <name>Mg(2+)</name>
        <dbReference type="ChEBI" id="CHEBI:18420"/>
    </cofactor>
    <text evidence="1">Binds 1 Mg(2+) ion per subunit.</text>
</comment>
<comment type="PTM">
    <text evidence="1">Activated by phosphorylation.</text>
</comment>
<comment type="similarity">
    <text evidence="1">Belongs to the phosphohexose mutase family.</text>
</comment>
<dbReference type="EC" id="5.4.2.10" evidence="1"/>
<dbReference type="EMBL" id="CP000853">
    <property type="protein sequence ID" value="ABW19914.1"/>
    <property type="molecule type" value="Genomic_DNA"/>
</dbReference>
<dbReference type="RefSeq" id="WP_012160221.1">
    <property type="nucleotide sequence ID" value="NC_009922.1"/>
</dbReference>
<dbReference type="SMR" id="A8MJD2"/>
<dbReference type="STRING" id="350688.Clos_2382"/>
<dbReference type="KEGG" id="aoe:Clos_2382"/>
<dbReference type="eggNOG" id="COG1109">
    <property type="taxonomic scope" value="Bacteria"/>
</dbReference>
<dbReference type="HOGENOM" id="CLU_016950_7_0_9"/>
<dbReference type="OrthoDB" id="9806956at2"/>
<dbReference type="Proteomes" id="UP000000269">
    <property type="component" value="Chromosome"/>
</dbReference>
<dbReference type="GO" id="GO:0005829">
    <property type="term" value="C:cytosol"/>
    <property type="evidence" value="ECO:0007669"/>
    <property type="project" value="TreeGrafter"/>
</dbReference>
<dbReference type="GO" id="GO:0000287">
    <property type="term" value="F:magnesium ion binding"/>
    <property type="evidence" value="ECO:0007669"/>
    <property type="project" value="UniProtKB-UniRule"/>
</dbReference>
<dbReference type="GO" id="GO:0008966">
    <property type="term" value="F:phosphoglucosamine mutase activity"/>
    <property type="evidence" value="ECO:0007669"/>
    <property type="project" value="UniProtKB-UniRule"/>
</dbReference>
<dbReference type="GO" id="GO:0004615">
    <property type="term" value="F:phosphomannomutase activity"/>
    <property type="evidence" value="ECO:0007669"/>
    <property type="project" value="TreeGrafter"/>
</dbReference>
<dbReference type="GO" id="GO:0005975">
    <property type="term" value="P:carbohydrate metabolic process"/>
    <property type="evidence" value="ECO:0007669"/>
    <property type="project" value="InterPro"/>
</dbReference>
<dbReference type="GO" id="GO:0009252">
    <property type="term" value="P:peptidoglycan biosynthetic process"/>
    <property type="evidence" value="ECO:0007669"/>
    <property type="project" value="TreeGrafter"/>
</dbReference>
<dbReference type="GO" id="GO:0006048">
    <property type="term" value="P:UDP-N-acetylglucosamine biosynthetic process"/>
    <property type="evidence" value="ECO:0007669"/>
    <property type="project" value="TreeGrafter"/>
</dbReference>
<dbReference type="CDD" id="cd05802">
    <property type="entry name" value="GlmM"/>
    <property type="match status" value="1"/>
</dbReference>
<dbReference type="FunFam" id="3.30.310.50:FF:000001">
    <property type="entry name" value="Phosphoglucosamine mutase"/>
    <property type="match status" value="1"/>
</dbReference>
<dbReference type="FunFam" id="3.40.120.10:FF:000001">
    <property type="entry name" value="Phosphoglucosamine mutase"/>
    <property type="match status" value="1"/>
</dbReference>
<dbReference type="FunFam" id="3.40.120.10:FF:000002">
    <property type="entry name" value="Phosphoglucosamine mutase"/>
    <property type="match status" value="1"/>
</dbReference>
<dbReference type="Gene3D" id="3.40.120.10">
    <property type="entry name" value="Alpha-D-Glucose-1,6-Bisphosphate, subunit A, domain 3"/>
    <property type="match status" value="3"/>
</dbReference>
<dbReference type="Gene3D" id="3.30.310.50">
    <property type="entry name" value="Alpha-D-phosphohexomutase, C-terminal domain"/>
    <property type="match status" value="1"/>
</dbReference>
<dbReference type="HAMAP" id="MF_01554_B">
    <property type="entry name" value="GlmM_B"/>
    <property type="match status" value="1"/>
</dbReference>
<dbReference type="InterPro" id="IPR005844">
    <property type="entry name" value="A-D-PHexomutase_a/b/a-I"/>
</dbReference>
<dbReference type="InterPro" id="IPR016055">
    <property type="entry name" value="A-D-PHexomutase_a/b/a-I/II/III"/>
</dbReference>
<dbReference type="InterPro" id="IPR005845">
    <property type="entry name" value="A-D-PHexomutase_a/b/a-II"/>
</dbReference>
<dbReference type="InterPro" id="IPR005846">
    <property type="entry name" value="A-D-PHexomutase_a/b/a-III"/>
</dbReference>
<dbReference type="InterPro" id="IPR005843">
    <property type="entry name" value="A-D-PHexomutase_C"/>
</dbReference>
<dbReference type="InterPro" id="IPR036900">
    <property type="entry name" value="A-D-PHexomutase_C_sf"/>
</dbReference>
<dbReference type="InterPro" id="IPR016066">
    <property type="entry name" value="A-D-PHexomutase_CS"/>
</dbReference>
<dbReference type="InterPro" id="IPR005841">
    <property type="entry name" value="Alpha-D-phosphohexomutase_SF"/>
</dbReference>
<dbReference type="InterPro" id="IPR006352">
    <property type="entry name" value="GlmM_bact"/>
</dbReference>
<dbReference type="InterPro" id="IPR050060">
    <property type="entry name" value="Phosphoglucosamine_mutase"/>
</dbReference>
<dbReference type="NCBIfam" id="TIGR01455">
    <property type="entry name" value="glmM"/>
    <property type="match status" value="1"/>
</dbReference>
<dbReference type="NCBIfam" id="NF008139">
    <property type="entry name" value="PRK10887.1"/>
    <property type="match status" value="1"/>
</dbReference>
<dbReference type="PANTHER" id="PTHR42946:SF1">
    <property type="entry name" value="PHOSPHOGLUCOMUTASE (ALPHA-D-GLUCOSE-1,6-BISPHOSPHATE-DEPENDENT)"/>
    <property type="match status" value="1"/>
</dbReference>
<dbReference type="PANTHER" id="PTHR42946">
    <property type="entry name" value="PHOSPHOHEXOSE MUTASE"/>
    <property type="match status" value="1"/>
</dbReference>
<dbReference type="Pfam" id="PF02878">
    <property type="entry name" value="PGM_PMM_I"/>
    <property type="match status" value="1"/>
</dbReference>
<dbReference type="Pfam" id="PF02879">
    <property type="entry name" value="PGM_PMM_II"/>
    <property type="match status" value="1"/>
</dbReference>
<dbReference type="Pfam" id="PF02880">
    <property type="entry name" value="PGM_PMM_III"/>
    <property type="match status" value="1"/>
</dbReference>
<dbReference type="Pfam" id="PF00408">
    <property type="entry name" value="PGM_PMM_IV"/>
    <property type="match status" value="1"/>
</dbReference>
<dbReference type="PRINTS" id="PR00509">
    <property type="entry name" value="PGMPMM"/>
</dbReference>
<dbReference type="SUPFAM" id="SSF55957">
    <property type="entry name" value="Phosphoglucomutase, C-terminal domain"/>
    <property type="match status" value="1"/>
</dbReference>
<dbReference type="SUPFAM" id="SSF53738">
    <property type="entry name" value="Phosphoglucomutase, first 3 domains"/>
    <property type="match status" value="3"/>
</dbReference>
<dbReference type="PROSITE" id="PS00710">
    <property type="entry name" value="PGM_PMM"/>
    <property type="match status" value="1"/>
</dbReference>
<proteinExistence type="inferred from homology"/>
<organism>
    <name type="scientific">Alkaliphilus oremlandii (strain OhILAs)</name>
    <name type="common">Clostridium oremlandii (strain OhILAs)</name>
    <dbReference type="NCBI Taxonomy" id="350688"/>
    <lineage>
        <taxon>Bacteria</taxon>
        <taxon>Bacillati</taxon>
        <taxon>Bacillota</taxon>
        <taxon>Clostridia</taxon>
        <taxon>Peptostreptococcales</taxon>
        <taxon>Natronincolaceae</taxon>
        <taxon>Alkaliphilus</taxon>
    </lineage>
</organism>
<feature type="chain" id="PRO_1000068886" description="Phosphoglucosamine mutase">
    <location>
        <begin position="1"/>
        <end position="449"/>
    </location>
</feature>
<feature type="active site" description="Phosphoserine intermediate" evidence="1">
    <location>
        <position position="101"/>
    </location>
</feature>
<feature type="binding site" description="via phosphate group" evidence="1">
    <location>
        <position position="101"/>
    </location>
    <ligand>
        <name>Mg(2+)</name>
        <dbReference type="ChEBI" id="CHEBI:18420"/>
    </ligand>
</feature>
<feature type="binding site" evidence="1">
    <location>
        <position position="241"/>
    </location>
    <ligand>
        <name>Mg(2+)</name>
        <dbReference type="ChEBI" id="CHEBI:18420"/>
    </ligand>
</feature>
<feature type="binding site" evidence="1">
    <location>
        <position position="243"/>
    </location>
    <ligand>
        <name>Mg(2+)</name>
        <dbReference type="ChEBI" id="CHEBI:18420"/>
    </ligand>
</feature>
<feature type="binding site" evidence="1">
    <location>
        <position position="245"/>
    </location>
    <ligand>
        <name>Mg(2+)</name>
        <dbReference type="ChEBI" id="CHEBI:18420"/>
    </ligand>
</feature>
<feature type="modified residue" description="Phosphoserine" evidence="1">
    <location>
        <position position="101"/>
    </location>
</feature>
<evidence type="ECO:0000255" key="1">
    <source>
        <dbReference type="HAMAP-Rule" id="MF_01554"/>
    </source>
</evidence>